<name>EP1L2_ARATH</name>
<feature type="signal peptide" evidence="1">
    <location>
        <begin position="1"/>
        <end position="22"/>
    </location>
</feature>
<feature type="chain" id="PRO_5009974826" description="EP1-like glycoprotein 2" evidence="1">
    <location>
        <begin position="23"/>
        <end position="455"/>
    </location>
</feature>
<feature type="domain" description="Bulb-type lectin" evidence="2">
    <location>
        <begin position="44"/>
        <end position="163"/>
    </location>
</feature>
<feature type="domain" description="PAN" evidence="3">
    <location>
        <begin position="374"/>
        <end position="455"/>
    </location>
</feature>
<feature type="modified residue" description="S-nitrosocysteine" evidence="6">
    <location>
        <position position="374"/>
    </location>
</feature>
<feature type="glycosylation site" description="N-linked (GlcNAc...) asparagine" evidence="4">
    <location>
        <position position="56"/>
    </location>
</feature>
<feature type="glycosylation site" description="N-linked (GlcNAc...) asparagine" evidence="4">
    <location>
        <position position="106"/>
    </location>
</feature>
<feature type="glycosylation site" description="N-linked (GlcNAc...) asparagine" evidence="4">
    <location>
        <position position="191"/>
    </location>
</feature>
<feature type="glycosylation site" description="N-linked (GlcNAc...) asparagine" evidence="4">
    <location>
        <position position="211"/>
    </location>
</feature>
<feature type="glycosylation site" description="N-linked (GlcNAc...) asparagine" evidence="4">
    <location>
        <position position="241"/>
    </location>
</feature>
<feature type="glycosylation site" description="N-linked (GlcNAc...) asparagine" evidence="4">
    <location>
        <position position="289"/>
    </location>
</feature>
<feature type="glycosylation site" description="N-linked (GlcNAc...) asparagine" evidence="4">
    <location>
        <position position="446"/>
    </location>
</feature>
<feature type="disulfide bond" evidence="3">
    <location>
        <begin position="410"/>
        <end position="432"/>
    </location>
</feature>
<feature type="disulfide bond" evidence="3">
    <location>
        <begin position="414"/>
        <end position="420"/>
    </location>
</feature>
<feature type="sequence conflict" description="In Ref. 3; AAN60345." evidence="9" ref="3">
    <location>
        <begin position="258"/>
        <end position="261"/>
    </location>
</feature>
<feature type="sequence conflict" description="In Ref. 4; AAL38777." evidence="9" ref="4">
    <original>T</original>
    <variation>I</variation>
    <location>
        <position position="280"/>
    </location>
</feature>
<feature type="sequence conflict" description="In Ref. 3; AAN60345." evidence="9" ref="3">
    <original>K</original>
    <variation>I</variation>
    <location>
        <position position="369"/>
    </location>
</feature>
<comment type="subcellular location">
    <subcellularLocation>
        <location evidence="7">Secreted</location>
    </subcellularLocation>
    <subcellularLocation>
        <location evidence="5">Secreted</location>
        <location evidence="5">Cell wall</location>
    </subcellularLocation>
</comment>
<protein>
    <recommendedName>
        <fullName evidence="9">EP1-like glycoprotein 2</fullName>
    </recommendedName>
    <alternativeName>
        <fullName evidence="8">Curculin-like (Mannose-binding) lectin family protein</fullName>
    </alternativeName>
</protein>
<evidence type="ECO:0000255" key="1"/>
<evidence type="ECO:0000255" key="2">
    <source>
        <dbReference type="PROSITE-ProRule" id="PRU00038"/>
    </source>
</evidence>
<evidence type="ECO:0000255" key="3">
    <source>
        <dbReference type="PROSITE-ProRule" id="PRU00315"/>
    </source>
</evidence>
<evidence type="ECO:0000255" key="4">
    <source>
        <dbReference type="PROSITE-ProRule" id="PRU00498"/>
    </source>
</evidence>
<evidence type="ECO:0000269" key="5">
    <source>
    </source>
</evidence>
<evidence type="ECO:0000269" key="6">
    <source>
    </source>
</evidence>
<evidence type="ECO:0000269" key="7">
    <source>
    </source>
</evidence>
<evidence type="ECO:0000303" key="8">
    <source>
    </source>
</evidence>
<evidence type="ECO:0000305" key="9"/>
<evidence type="ECO:0000312" key="10">
    <source>
        <dbReference type="Araport" id="AT1G78830"/>
    </source>
</evidence>
<evidence type="ECO:0000312" key="11">
    <source>
        <dbReference type="EMBL" id="AAC83028.1"/>
    </source>
</evidence>
<sequence length="455" mass="50343">MSRFAILVTLALAIATVSVVIAQVPPEKQFRVVNEGEFGEYITEYDASYRFIESSNQSFFTSPFQLLFYNTTPSAYILALRVGLRRDESTMRWIWDANRNNPVGENATLSLGRNGNLVLAEADGRVKWQTNTANKGVTGFQILPNGNIVLHDKNGKFVWQSFDHPTDTLLTGQSLKVNGVNKLVSRTSDSNGSDGPYSMVLDKKGLTMYVNKTGTPLVYGGWPDHDFRGTVTFAVTREFDNLTEPSAYELLLEPAPQPATNPGNNRRLLQVRPIGSGGGTLNLNKINYNGTISYLRLGSDGSLKAYSYFPAATYLKWEESFSFFSTYFVRQCGLPSFCGDYGYCDRGMCNACPTPKGLLGWSDKCAPPKTTQFCSGVKGKTVNYYKIVGVEHFTGPYVNDGQGPTSVNDCKAKCDRDCKCLGYFYKEKDKKCLLAPLLGTLIKDANTSSVAYIKY</sequence>
<keyword id="KW-0134">Cell wall</keyword>
<keyword id="KW-1015">Disulfide bond</keyword>
<keyword id="KW-0325">Glycoprotein</keyword>
<keyword id="KW-0430">Lectin</keyword>
<keyword id="KW-1185">Reference proteome</keyword>
<keyword id="KW-0702">S-nitrosylation</keyword>
<keyword id="KW-0964">Secreted</keyword>
<keyword id="KW-0732">Signal</keyword>
<organism>
    <name type="scientific">Arabidopsis thaliana</name>
    <name type="common">Mouse-ear cress</name>
    <dbReference type="NCBI Taxonomy" id="3702"/>
    <lineage>
        <taxon>Eukaryota</taxon>
        <taxon>Viridiplantae</taxon>
        <taxon>Streptophyta</taxon>
        <taxon>Embryophyta</taxon>
        <taxon>Tracheophyta</taxon>
        <taxon>Spermatophyta</taxon>
        <taxon>Magnoliopsida</taxon>
        <taxon>eudicotyledons</taxon>
        <taxon>Gunneridae</taxon>
        <taxon>Pentapetalae</taxon>
        <taxon>rosids</taxon>
        <taxon>malvids</taxon>
        <taxon>Brassicales</taxon>
        <taxon>Brassicaceae</taxon>
        <taxon>Camelineae</taxon>
        <taxon>Arabidopsis</taxon>
    </lineage>
</organism>
<gene>
    <name evidence="10" type="ordered locus">At1g78830</name>
    <name evidence="11" type="ORF">F9K20.12</name>
</gene>
<proteinExistence type="evidence at protein level"/>
<reference key="1">
    <citation type="journal article" date="2000" name="Nature">
        <title>Sequence and analysis of chromosome 1 of the plant Arabidopsis thaliana.</title>
        <authorList>
            <person name="Theologis A."/>
            <person name="Ecker J.R."/>
            <person name="Palm C.J."/>
            <person name="Federspiel N.A."/>
            <person name="Kaul S."/>
            <person name="White O."/>
            <person name="Alonso J."/>
            <person name="Altafi H."/>
            <person name="Araujo R."/>
            <person name="Bowman C.L."/>
            <person name="Brooks S.Y."/>
            <person name="Buehler E."/>
            <person name="Chan A."/>
            <person name="Chao Q."/>
            <person name="Chen H."/>
            <person name="Cheuk R.F."/>
            <person name="Chin C.W."/>
            <person name="Chung M.K."/>
            <person name="Conn L."/>
            <person name="Conway A.B."/>
            <person name="Conway A.R."/>
            <person name="Creasy T.H."/>
            <person name="Dewar K."/>
            <person name="Dunn P."/>
            <person name="Etgu P."/>
            <person name="Feldblyum T.V."/>
            <person name="Feng J.-D."/>
            <person name="Fong B."/>
            <person name="Fujii C.Y."/>
            <person name="Gill J.E."/>
            <person name="Goldsmith A.D."/>
            <person name="Haas B."/>
            <person name="Hansen N.F."/>
            <person name="Hughes B."/>
            <person name="Huizar L."/>
            <person name="Hunter J.L."/>
            <person name="Jenkins J."/>
            <person name="Johnson-Hopson C."/>
            <person name="Khan S."/>
            <person name="Khaykin E."/>
            <person name="Kim C.J."/>
            <person name="Koo H.L."/>
            <person name="Kremenetskaia I."/>
            <person name="Kurtz D.B."/>
            <person name="Kwan A."/>
            <person name="Lam B."/>
            <person name="Langin-Hooper S."/>
            <person name="Lee A."/>
            <person name="Lee J.M."/>
            <person name="Lenz C.A."/>
            <person name="Li J.H."/>
            <person name="Li Y.-P."/>
            <person name="Lin X."/>
            <person name="Liu S.X."/>
            <person name="Liu Z.A."/>
            <person name="Luros J.S."/>
            <person name="Maiti R."/>
            <person name="Marziali A."/>
            <person name="Militscher J."/>
            <person name="Miranda M."/>
            <person name="Nguyen M."/>
            <person name="Nierman W.C."/>
            <person name="Osborne B.I."/>
            <person name="Pai G."/>
            <person name="Peterson J."/>
            <person name="Pham P.K."/>
            <person name="Rizzo M."/>
            <person name="Rooney T."/>
            <person name="Rowley D."/>
            <person name="Sakano H."/>
            <person name="Salzberg S.L."/>
            <person name="Schwartz J.R."/>
            <person name="Shinn P."/>
            <person name="Southwick A.M."/>
            <person name="Sun H."/>
            <person name="Tallon L.J."/>
            <person name="Tambunga G."/>
            <person name="Toriumi M.J."/>
            <person name="Town C.D."/>
            <person name="Utterback T."/>
            <person name="Van Aken S."/>
            <person name="Vaysberg M."/>
            <person name="Vysotskaia V.S."/>
            <person name="Walker M."/>
            <person name="Wu D."/>
            <person name="Yu G."/>
            <person name="Fraser C.M."/>
            <person name="Venter J.C."/>
            <person name="Davis R.W."/>
        </authorList>
    </citation>
    <scope>NUCLEOTIDE SEQUENCE [LARGE SCALE GENOMIC DNA]</scope>
    <source>
        <strain>cv. Columbia</strain>
    </source>
</reference>
<reference key="2">
    <citation type="journal article" date="2017" name="Plant J.">
        <title>Araport11: a complete reannotation of the Arabidopsis thaliana reference genome.</title>
        <authorList>
            <person name="Cheng C.Y."/>
            <person name="Krishnakumar V."/>
            <person name="Chan A.P."/>
            <person name="Thibaud-Nissen F."/>
            <person name="Schobel S."/>
            <person name="Town C.D."/>
        </authorList>
    </citation>
    <scope>GENOME REANNOTATION</scope>
    <source>
        <strain>cv. Columbia</strain>
    </source>
</reference>
<reference key="3">
    <citation type="submission" date="1998-08" db="EMBL/GenBank/DDBJ databases">
        <title>Signal peptide selection derived cDNAs from Arabidopsis thaliana leaves and guard cells.</title>
        <authorList>
            <person name="Stracke R."/>
            <person name="Palme K."/>
        </authorList>
    </citation>
    <scope>NUCLEOTIDE SEQUENCE [LARGE SCALE MRNA]</scope>
</reference>
<reference key="4">
    <citation type="journal article" date="2003" name="Science">
        <title>Empirical analysis of transcriptional activity in the Arabidopsis genome.</title>
        <authorList>
            <person name="Yamada K."/>
            <person name="Lim J."/>
            <person name="Dale J.M."/>
            <person name="Chen H."/>
            <person name="Shinn P."/>
            <person name="Palm C.J."/>
            <person name="Southwick A.M."/>
            <person name="Wu H.C."/>
            <person name="Kim C.J."/>
            <person name="Nguyen M."/>
            <person name="Pham P.K."/>
            <person name="Cheuk R.F."/>
            <person name="Karlin-Newmann G."/>
            <person name="Liu S.X."/>
            <person name="Lam B."/>
            <person name="Sakano H."/>
            <person name="Wu T."/>
            <person name="Yu G."/>
            <person name="Miranda M."/>
            <person name="Quach H.L."/>
            <person name="Tripp M."/>
            <person name="Chang C.H."/>
            <person name="Lee J.M."/>
            <person name="Toriumi M.J."/>
            <person name="Chan M.M."/>
            <person name="Tang C.C."/>
            <person name="Onodera C.S."/>
            <person name="Deng J.M."/>
            <person name="Akiyama K."/>
            <person name="Ansari Y."/>
            <person name="Arakawa T."/>
            <person name="Banh J."/>
            <person name="Banno F."/>
            <person name="Bowser L."/>
            <person name="Brooks S.Y."/>
            <person name="Carninci P."/>
            <person name="Chao Q."/>
            <person name="Choy N."/>
            <person name="Enju A."/>
            <person name="Goldsmith A.D."/>
            <person name="Gurjal M."/>
            <person name="Hansen N.F."/>
            <person name="Hayashizaki Y."/>
            <person name="Johnson-Hopson C."/>
            <person name="Hsuan V.W."/>
            <person name="Iida K."/>
            <person name="Karnes M."/>
            <person name="Khan S."/>
            <person name="Koesema E."/>
            <person name="Ishida J."/>
            <person name="Jiang P.X."/>
            <person name="Jones T."/>
            <person name="Kawai J."/>
            <person name="Kamiya A."/>
            <person name="Meyers C."/>
            <person name="Nakajima M."/>
            <person name="Narusaka M."/>
            <person name="Seki M."/>
            <person name="Sakurai T."/>
            <person name="Satou M."/>
            <person name="Tamse R."/>
            <person name="Vaysberg M."/>
            <person name="Wallender E.K."/>
            <person name="Wong C."/>
            <person name="Yamamura Y."/>
            <person name="Yuan S."/>
            <person name="Shinozaki K."/>
            <person name="Davis R.W."/>
            <person name="Theologis A."/>
            <person name="Ecker J.R."/>
        </authorList>
    </citation>
    <scope>NUCLEOTIDE SEQUENCE [LARGE SCALE MRNA]</scope>
    <source>
        <strain>cv. Columbia</strain>
    </source>
</reference>
<reference key="5">
    <citation type="submission" date="2005-03" db="EMBL/GenBank/DDBJ databases">
        <title>Large-scale analysis of RIKEN Arabidopsis full-length (RAFL) cDNAs.</title>
        <authorList>
            <person name="Totoki Y."/>
            <person name="Seki M."/>
            <person name="Ishida J."/>
            <person name="Nakajima M."/>
            <person name="Enju A."/>
            <person name="Kamiya A."/>
            <person name="Narusaka M."/>
            <person name="Shin-i T."/>
            <person name="Nakagawa M."/>
            <person name="Sakamoto N."/>
            <person name="Oishi K."/>
            <person name="Kohara Y."/>
            <person name="Kobayashi M."/>
            <person name="Toyoda A."/>
            <person name="Sakaki Y."/>
            <person name="Sakurai T."/>
            <person name="Iida K."/>
            <person name="Akiyama K."/>
            <person name="Satou M."/>
            <person name="Toyoda T."/>
            <person name="Konagaya A."/>
            <person name="Carninci P."/>
            <person name="Kawai J."/>
            <person name="Hayashizaki Y."/>
            <person name="Shinozaki K."/>
        </authorList>
    </citation>
    <scope>NUCLEOTIDE SEQUENCE [LARGE SCALE MRNA] OF 399-455</scope>
    <source>
        <strain>cv. Columbia</strain>
    </source>
</reference>
<reference key="6">
    <citation type="journal article" date="2008" name="BMC Plant Biol.">
        <title>A new picture of cell wall protein dynamics in elongating cells of Arabidopsis thaliana: confirmed actors and newcomers.</title>
        <authorList>
            <person name="Irshad M."/>
            <person name="Canut H."/>
            <person name="Borderies G."/>
            <person name="Pont-Lezica R."/>
            <person name="Jamet E."/>
        </authorList>
    </citation>
    <scope>SUBCELLULAR LOCATION</scope>
</reference>
<reference key="7">
    <citation type="journal article" date="2011" name="Biochem. Biophys. Res. Commun.">
        <title>Proteomics investigation of endogenous S-nitrosylation in Arabidopsis.</title>
        <authorList>
            <person name="Fares A."/>
            <person name="Rossignol M."/>
            <person name="Peltier J.B."/>
        </authorList>
    </citation>
    <scope>S-NITROSYLATION AT CYS-374</scope>
</reference>
<reference key="8">
    <citation type="journal article" date="2013" name="Plant J.">
        <title>An in vivo expression system for the identification of cargo proteins of vacuolar sorting receptors in Arabidopsis culture cells.</title>
        <authorList>
            <person name="Shen J."/>
            <person name="Suen P.K."/>
            <person name="Wang X."/>
            <person name="Lin Y."/>
            <person name="Lo S.W."/>
            <person name="Rojo E."/>
            <person name="Jiang L."/>
        </authorList>
    </citation>
    <scope>SUBCELLULAR LOCATION</scope>
</reference>
<accession>Q9ZVA2</accession>
<accession>Q56Z24</accession>
<accession>Q8H788</accession>
<accession>Q8VZ33</accession>
<dbReference type="EMBL" id="AC005679">
    <property type="protein sequence ID" value="AAC83028.1"/>
    <property type="molecule type" value="Genomic_DNA"/>
</dbReference>
<dbReference type="EMBL" id="CP002684">
    <property type="protein sequence ID" value="AEE36160.1"/>
    <property type="molecule type" value="Genomic_DNA"/>
</dbReference>
<dbReference type="EMBL" id="AF083787">
    <property type="protein sequence ID" value="AAN60345.1"/>
    <property type="molecule type" value="mRNA"/>
</dbReference>
<dbReference type="EMBL" id="AF428439">
    <property type="protein sequence ID" value="AAL16208.1"/>
    <property type="molecule type" value="mRNA"/>
</dbReference>
<dbReference type="EMBL" id="AY150414">
    <property type="protein sequence ID" value="AAN12959.1"/>
    <property type="molecule type" value="mRNA"/>
</dbReference>
<dbReference type="EMBL" id="AY065301">
    <property type="protein sequence ID" value="AAL38777.1"/>
    <property type="molecule type" value="mRNA"/>
</dbReference>
<dbReference type="EMBL" id="AK221145">
    <property type="protein sequence ID" value="BAD95140.1"/>
    <property type="molecule type" value="mRNA"/>
</dbReference>
<dbReference type="PIR" id="F96817">
    <property type="entry name" value="F96817"/>
</dbReference>
<dbReference type="RefSeq" id="NP_565191.1">
    <property type="nucleotide sequence ID" value="NM_106531.3"/>
</dbReference>
<dbReference type="SMR" id="Q9ZVA2"/>
<dbReference type="FunCoup" id="Q9ZVA2">
    <property type="interactions" value="61"/>
</dbReference>
<dbReference type="STRING" id="3702.Q9ZVA2"/>
<dbReference type="GlyGen" id="Q9ZVA2">
    <property type="glycosylation" value="8 sites"/>
</dbReference>
<dbReference type="PaxDb" id="3702-AT1G78830.1"/>
<dbReference type="ProteomicsDB" id="230053"/>
<dbReference type="EnsemblPlants" id="AT1G78830.1">
    <property type="protein sequence ID" value="AT1G78830.1"/>
    <property type="gene ID" value="AT1G78830"/>
</dbReference>
<dbReference type="GeneID" id="844220"/>
<dbReference type="Gramene" id="AT1G78830.1">
    <property type="protein sequence ID" value="AT1G78830.1"/>
    <property type="gene ID" value="AT1G78830"/>
</dbReference>
<dbReference type="KEGG" id="ath:AT1G78830"/>
<dbReference type="Araport" id="AT1G78830"/>
<dbReference type="TAIR" id="AT1G78830"/>
<dbReference type="eggNOG" id="ENOG502QU13">
    <property type="taxonomic scope" value="Eukaryota"/>
</dbReference>
<dbReference type="HOGENOM" id="CLU_043351_0_0_1"/>
<dbReference type="InParanoid" id="Q9ZVA2"/>
<dbReference type="OMA" id="GRVKWQT"/>
<dbReference type="PhylomeDB" id="Q9ZVA2"/>
<dbReference type="PRO" id="PR:Q9ZVA2"/>
<dbReference type="Proteomes" id="UP000006548">
    <property type="component" value="Chromosome 1"/>
</dbReference>
<dbReference type="ExpressionAtlas" id="Q9ZVA2">
    <property type="expression patterns" value="baseline and differential"/>
</dbReference>
<dbReference type="GO" id="GO:0048046">
    <property type="term" value="C:apoplast"/>
    <property type="evidence" value="ECO:0007005"/>
    <property type="project" value="TAIR"/>
</dbReference>
<dbReference type="GO" id="GO:0005794">
    <property type="term" value="C:Golgi apparatus"/>
    <property type="evidence" value="ECO:0007005"/>
    <property type="project" value="TAIR"/>
</dbReference>
<dbReference type="GO" id="GO:0005739">
    <property type="term" value="C:mitochondrion"/>
    <property type="evidence" value="ECO:0007005"/>
    <property type="project" value="TAIR"/>
</dbReference>
<dbReference type="GO" id="GO:0009505">
    <property type="term" value="C:plant-type cell wall"/>
    <property type="evidence" value="ECO:0007005"/>
    <property type="project" value="TAIR"/>
</dbReference>
<dbReference type="GO" id="GO:0005886">
    <property type="term" value="C:plasma membrane"/>
    <property type="evidence" value="ECO:0000314"/>
    <property type="project" value="TAIR"/>
</dbReference>
<dbReference type="GO" id="GO:0009506">
    <property type="term" value="C:plasmodesma"/>
    <property type="evidence" value="ECO:0007005"/>
    <property type="project" value="TAIR"/>
</dbReference>
<dbReference type="GO" id="GO:0099503">
    <property type="term" value="C:secretory vesicle"/>
    <property type="evidence" value="ECO:0007005"/>
    <property type="project" value="TAIR"/>
</dbReference>
<dbReference type="GO" id="GO:0030246">
    <property type="term" value="F:carbohydrate binding"/>
    <property type="evidence" value="ECO:0007669"/>
    <property type="project" value="UniProtKB-KW"/>
</dbReference>
<dbReference type="CDD" id="cd00028">
    <property type="entry name" value="B_lectin"/>
    <property type="match status" value="1"/>
</dbReference>
<dbReference type="FunFam" id="2.90.10.10:FF:000018">
    <property type="entry name" value="EP1-like glycoprotein 2"/>
    <property type="match status" value="1"/>
</dbReference>
<dbReference type="FunFam" id="2.90.10.30:FF:000003">
    <property type="entry name" value="Os04g0303100 protein"/>
    <property type="match status" value="1"/>
</dbReference>
<dbReference type="Gene3D" id="2.90.10.10">
    <property type="entry name" value="Bulb-type lectin domain"/>
    <property type="match status" value="1"/>
</dbReference>
<dbReference type="InterPro" id="IPR001480">
    <property type="entry name" value="Bulb-type_lectin_dom"/>
</dbReference>
<dbReference type="InterPro" id="IPR036426">
    <property type="entry name" value="Bulb-type_lectin_dom_sf"/>
</dbReference>
<dbReference type="InterPro" id="IPR035446">
    <property type="entry name" value="SLSG/EP1"/>
</dbReference>
<dbReference type="PANTHER" id="PTHR32444">
    <property type="entry name" value="BULB-TYPE LECTIN DOMAIN-CONTAINING PROTEIN"/>
    <property type="match status" value="1"/>
</dbReference>
<dbReference type="PANTHER" id="PTHR32444:SF179">
    <property type="entry name" value="EP1-LIKE GLYCOPROTEIN 2"/>
    <property type="match status" value="1"/>
</dbReference>
<dbReference type="Pfam" id="PF01453">
    <property type="entry name" value="B_lectin"/>
    <property type="match status" value="1"/>
</dbReference>
<dbReference type="PIRSF" id="PIRSF002686">
    <property type="entry name" value="SLG"/>
    <property type="match status" value="1"/>
</dbReference>
<dbReference type="SMART" id="SM00108">
    <property type="entry name" value="B_lectin"/>
    <property type="match status" value="1"/>
</dbReference>
<dbReference type="SUPFAM" id="SSF51110">
    <property type="entry name" value="alpha-D-mannose-specific plant lectins"/>
    <property type="match status" value="1"/>
</dbReference>
<dbReference type="PROSITE" id="PS50927">
    <property type="entry name" value="BULB_LECTIN"/>
    <property type="match status" value="1"/>
</dbReference>